<keyword id="KW-0066">ATP synthesis</keyword>
<keyword id="KW-0138">CF(0)</keyword>
<keyword id="KW-0375">Hydrogen ion transport</keyword>
<keyword id="KW-0406">Ion transport</keyword>
<keyword id="KW-0446">Lipid-binding</keyword>
<keyword id="KW-0472">Membrane</keyword>
<keyword id="KW-0793">Thylakoid</keyword>
<keyword id="KW-0812">Transmembrane</keyword>
<keyword id="KW-1133">Transmembrane helix</keyword>
<keyword id="KW-0813">Transport</keyword>
<accession>A2BT29</accession>
<dbReference type="EMBL" id="CP000551">
    <property type="protein sequence ID" value="ABM70940.1"/>
    <property type="molecule type" value="Genomic_DNA"/>
</dbReference>
<dbReference type="RefSeq" id="WP_002805169.1">
    <property type="nucleotide sequence ID" value="NC_008816.1"/>
</dbReference>
<dbReference type="SMR" id="A2BT29"/>
<dbReference type="STRING" id="146891.A9601_16571"/>
<dbReference type="GeneID" id="60201071"/>
<dbReference type="KEGG" id="pmb:A9601_16571"/>
<dbReference type="eggNOG" id="COG0636">
    <property type="taxonomic scope" value="Bacteria"/>
</dbReference>
<dbReference type="HOGENOM" id="CLU_148047_2_0_3"/>
<dbReference type="OrthoDB" id="9810379at2"/>
<dbReference type="Proteomes" id="UP000002590">
    <property type="component" value="Chromosome"/>
</dbReference>
<dbReference type="GO" id="GO:0031676">
    <property type="term" value="C:plasma membrane-derived thylakoid membrane"/>
    <property type="evidence" value="ECO:0007669"/>
    <property type="project" value="UniProtKB-SubCell"/>
</dbReference>
<dbReference type="GO" id="GO:0045259">
    <property type="term" value="C:proton-transporting ATP synthase complex"/>
    <property type="evidence" value="ECO:0007669"/>
    <property type="project" value="UniProtKB-KW"/>
</dbReference>
<dbReference type="GO" id="GO:0033177">
    <property type="term" value="C:proton-transporting two-sector ATPase complex, proton-transporting domain"/>
    <property type="evidence" value="ECO:0007669"/>
    <property type="project" value="InterPro"/>
</dbReference>
<dbReference type="GO" id="GO:0008289">
    <property type="term" value="F:lipid binding"/>
    <property type="evidence" value="ECO:0007669"/>
    <property type="project" value="UniProtKB-KW"/>
</dbReference>
<dbReference type="GO" id="GO:0046933">
    <property type="term" value="F:proton-transporting ATP synthase activity, rotational mechanism"/>
    <property type="evidence" value="ECO:0007669"/>
    <property type="project" value="UniProtKB-UniRule"/>
</dbReference>
<dbReference type="CDD" id="cd18183">
    <property type="entry name" value="ATP-synt_Fo_c_ATPH"/>
    <property type="match status" value="1"/>
</dbReference>
<dbReference type="FunFam" id="1.20.20.10:FF:000001">
    <property type="entry name" value="ATP synthase subunit c, chloroplastic"/>
    <property type="match status" value="1"/>
</dbReference>
<dbReference type="Gene3D" id="1.20.20.10">
    <property type="entry name" value="F1F0 ATP synthase subunit C"/>
    <property type="match status" value="1"/>
</dbReference>
<dbReference type="HAMAP" id="MF_01396">
    <property type="entry name" value="ATP_synth_c_bact"/>
    <property type="match status" value="1"/>
</dbReference>
<dbReference type="InterPro" id="IPR005953">
    <property type="entry name" value="ATP_synth_csu_bac/chlpt"/>
</dbReference>
<dbReference type="InterPro" id="IPR000454">
    <property type="entry name" value="ATP_synth_F0_csu"/>
</dbReference>
<dbReference type="InterPro" id="IPR020537">
    <property type="entry name" value="ATP_synth_F0_csu_DDCD_BS"/>
</dbReference>
<dbReference type="InterPro" id="IPR038662">
    <property type="entry name" value="ATP_synth_F0_csu_sf"/>
</dbReference>
<dbReference type="InterPro" id="IPR002379">
    <property type="entry name" value="ATPase_proteolipid_c-like_dom"/>
</dbReference>
<dbReference type="InterPro" id="IPR035921">
    <property type="entry name" value="F/V-ATP_Csub_sf"/>
</dbReference>
<dbReference type="NCBIfam" id="TIGR01260">
    <property type="entry name" value="ATP_synt_c"/>
    <property type="match status" value="1"/>
</dbReference>
<dbReference type="NCBIfam" id="NF005608">
    <property type="entry name" value="PRK07354.1"/>
    <property type="match status" value="1"/>
</dbReference>
<dbReference type="PANTHER" id="PTHR10031">
    <property type="entry name" value="ATP SYNTHASE LIPID-BINDING PROTEIN, MITOCHONDRIAL"/>
    <property type="match status" value="1"/>
</dbReference>
<dbReference type="PANTHER" id="PTHR10031:SF0">
    <property type="entry name" value="ATPASE PROTEIN 9"/>
    <property type="match status" value="1"/>
</dbReference>
<dbReference type="Pfam" id="PF00137">
    <property type="entry name" value="ATP-synt_C"/>
    <property type="match status" value="1"/>
</dbReference>
<dbReference type="PRINTS" id="PR00124">
    <property type="entry name" value="ATPASEC"/>
</dbReference>
<dbReference type="SUPFAM" id="SSF81333">
    <property type="entry name" value="F1F0 ATP synthase subunit C"/>
    <property type="match status" value="1"/>
</dbReference>
<dbReference type="PROSITE" id="PS00605">
    <property type="entry name" value="ATPASE_C"/>
    <property type="match status" value="1"/>
</dbReference>
<comment type="function">
    <text evidence="1">F(1)F(0) ATP synthase produces ATP from ADP in the presence of a proton or sodium gradient. F-type ATPases consist of two structural domains, F(1) containing the extramembraneous catalytic core and F(0) containing the membrane proton channel, linked together by a central stalk and a peripheral stalk. During catalysis, ATP synthesis in the catalytic domain of F(1) is coupled via a rotary mechanism of the central stalk subunits to proton translocation.</text>
</comment>
<comment type="function">
    <text evidence="1">Key component of the F(0) channel; it plays a direct role in translocation across the membrane. A homomeric c-ring of between 10-14 subunits forms the central stalk rotor element with the F(1) delta and epsilon subunits.</text>
</comment>
<comment type="subunit">
    <text evidence="1">F-type ATPases have 2 components, F(1) - the catalytic core - and F(0) - the membrane proton channel. F(1) has five subunits: alpha(3), beta(3), gamma(1), delta(1), epsilon(1). F(0) has four main subunits: a(1), b(1), b'(1) and c(10-14). The alpha and beta chains form an alternating ring which encloses part of the gamma chain. F(1) is attached to F(0) by a central stalk formed by the gamma and epsilon chains, while a peripheral stalk is formed by the delta, b and b' chains.</text>
</comment>
<comment type="subcellular location">
    <subcellularLocation>
        <location evidence="1">Cellular thylakoid membrane</location>
        <topology evidence="1">Multi-pass membrane protein</topology>
    </subcellularLocation>
</comment>
<comment type="similarity">
    <text evidence="1">Belongs to the ATPase C chain family.</text>
</comment>
<protein>
    <recommendedName>
        <fullName evidence="1">ATP synthase subunit c</fullName>
    </recommendedName>
    <alternativeName>
        <fullName evidence="1">ATP synthase F(0) sector subunit c</fullName>
    </alternativeName>
    <alternativeName>
        <fullName evidence="1">F-type ATPase subunit c</fullName>
        <shortName evidence="1">F-ATPase subunit c</shortName>
    </alternativeName>
    <alternativeName>
        <fullName evidence="1">Lipid-binding protein</fullName>
    </alternativeName>
</protein>
<gene>
    <name evidence="1" type="primary">atpE</name>
    <name evidence="1" type="synonym">atpH</name>
    <name type="ordered locus">A9601_16571</name>
</gene>
<proteinExistence type="inferred from homology"/>
<evidence type="ECO:0000255" key="1">
    <source>
        <dbReference type="HAMAP-Rule" id="MF_01396"/>
    </source>
</evidence>
<feature type="chain" id="PRO_0000365911" description="ATP synthase subunit c">
    <location>
        <begin position="1"/>
        <end position="81"/>
    </location>
</feature>
<feature type="transmembrane region" description="Helical" evidence="1">
    <location>
        <begin position="7"/>
        <end position="27"/>
    </location>
</feature>
<feature type="transmembrane region" description="Helical" evidence="1">
    <location>
        <begin position="57"/>
        <end position="77"/>
    </location>
</feature>
<feature type="site" description="Reversibly protonated during proton transport" evidence="1">
    <location>
        <position position="61"/>
    </location>
</feature>
<organism>
    <name type="scientific">Prochlorococcus marinus (strain AS9601)</name>
    <dbReference type="NCBI Taxonomy" id="146891"/>
    <lineage>
        <taxon>Bacteria</taxon>
        <taxon>Bacillati</taxon>
        <taxon>Cyanobacteriota</taxon>
        <taxon>Cyanophyceae</taxon>
        <taxon>Synechococcales</taxon>
        <taxon>Prochlorococcaceae</taxon>
        <taxon>Prochlorococcus</taxon>
    </lineage>
</organism>
<name>ATPL_PROMS</name>
<sequence>MDSITSAASVVAAGLAVGLGAIGPGLGQGNAAQGAVEGIARQPEAEGKIRGTLLLSFAFMESLTIYGLVVALVLLFANPFS</sequence>
<reference key="1">
    <citation type="journal article" date="2007" name="PLoS Genet.">
        <title>Patterns and implications of gene gain and loss in the evolution of Prochlorococcus.</title>
        <authorList>
            <person name="Kettler G.C."/>
            <person name="Martiny A.C."/>
            <person name="Huang K."/>
            <person name="Zucker J."/>
            <person name="Coleman M.L."/>
            <person name="Rodrigue S."/>
            <person name="Chen F."/>
            <person name="Lapidus A."/>
            <person name="Ferriera S."/>
            <person name="Johnson J."/>
            <person name="Steglich C."/>
            <person name="Church G.M."/>
            <person name="Richardson P."/>
            <person name="Chisholm S.W."/>
        </authorList>
    </citation>
    <scope>NUCLEOTIDE SEQUENCE [LARGE SCALE GENOMIC DNA]</scope>
    <source>
        <strain>AS9601</strain>
    </source>
</reference>